<organism>
    <name type="scientific">Pseudomonas aeruginosa (strain ATCC 15692 / DSM 22644 / CIP 104116 / JCM 14847 / LMG 12228 / 1C / PRS 101 / PAO1)</name>
    <dbReference type="NCBI Taxonomy" id="208964"/>
    <lineage>
        <taxon>Bacteria</taxon>
        <taxon>Pseudomonadati</taxon>
        <taxon>Pseudomonadota</taxon>
        <taxon>Gammaproteobacteria</taxon>
        <taxon>Pseudomonadales</taxon>
        <taxon>Pseudomonadaceae</taxon>
        <taxon>Pseudomonas</taxon>
    </lineage>
</organism>
<reference key="1">
    <citation type="journal article" date="1999" name="DNA Res.">
        <title>The gene for an exopolyphosphatase of Pseudomonas aeruginosa.</title>
        <authorList>
            <person name="Miyake T."/>
            <person name="Shiba T."/>
            <person name="Kameda A."/>
            <person name="Ihara Y."/>
            <person name="Munekata M."/>
            <person name="Ishige K."/>
            <person name="Noguchi T."/>
        </authorList>
    </citation>
    <scope>NUCLEOTIDE SEQUENCE [GENOMIC DNA]</scope>
    <scope>FUNCTION</scope>
    <scope>CATALYTIC ACTIVITY</scope>
    <source>
        <strain>ATCC 15692 / DSM 22644 / CIP 104116 / JCM 14847 / LMG 12228 / 1C / PRS 101 / PAO1</strain>
    </source>
</reference>
<reference key="2">
    <citation type="journal article" date="2000" name="Nature">
        <title>Complete genome sequence of Pseudomonas aeruginosa PAO1, an opportunistic pathogen.</title>
        <authorList>
            <person name="Stover C.K."/>
            <person name="Pham X.-Q.T."/>
            <person name="Erwin A.L."/>
            <person name="Mizoguchi S.D."/>
            <person name="Warrener P."/>
            <person name="Hickey M.J."/>
            <person name="Brinkman F.S.L."/>
            <person name="Hufnagle W.O."/>
            <person name="Kowalik D.J."/>
            <person name="Lagrou M."/>
            <person name="Garber R.L."/>
            <person name="Goltry L."/>
            <person name="Tolentino E."/>
            <person name="Westbrock-Wadman S."/>
            <person name="Yuan Y."/>
            <person name="Brody L.L."/>
            <person name="Coulter S.N."/>
            <person name="Folger K.R."/>
            <person name="Kas A."/>
            <person name="Larbig K."/>
            <person name="Lim R.M."/>
            <person name="Smith K.A."/>
            <person name="Spencer D.H."/>
            <person name="Wong G.K.-S."/>
            <person name="Wu Z."/>
            <person name="Paulsen I.T."/>
            <person name="Reizer J."/>
            <person name="Saier M.H. Jr."/>
            <person name="Hancock R.E.W."/>
            <person name="Lory S."/>
            <person name="Olson M.V."/>
        </authorList>
    </citation>
    <scope>NUCLEOTIDE SEQUENCE [LARGE SCALE GENOMIC DNA]</scope>
    <source>
        <strain>ATCC 15692 / DSM 22644 / CIP 104116 / JCM 14847 / LMG 12228 / 1C / PRS 101 / PAO1</strain>
    </source>
</reference>
<reference key="3">
    <citation type="journal article" date="2015" name="Enzyme Res.">
        <title>Pseudomonas aeruginosa exopolyphosphatase is also a polyphosphate: ADP phosphotransferase.</title>
        <authorList>
            <person name="Beassoni P.R."/>
            <person name="Gallarato L.A."/>
            <person name="Boetsch C."/>
            <person name="Garrido M.N."/>
            <person name="Lisa A.T."/>
        </authorList>
    </citation>
    <scope>FUNCTION AS A PHOSPHATASE</scope>
    <scope>FUNCTION AS A TRANSFERASE</scope>
    <scope>CATALYTIC ACTIVITY</scope>
    <scope>COFACTOR</scope>
    <scope>ACTIVITY REGULATION</scope>
    <scope>BIOPHYSICOCHEMICAL PROPERTIES</scope>
    <scope>DOMAIN</scope>
    <scope>MUTAGENESIS OF GLU-126; ASP-149; GLY-151; SER-154 AND GLU-156</scope>
    <source>
        <strain>ATCC 15692 / DSM 22644 / CIP 104116 / JCM 14847 / LMG 12228 / 1C / PRS 101 / PAO1</strain>
    </source>
</reference>
<name>PPX_PSEAE</name>
<sequence length="506" mass="56419">MDLQSMPQKPAEAFPLIAALDLGSNSFHLCLAKANIHGEVRILERLGEKVQLAAGLDEERNLSEEATQRGLDCLRRFAQFISGMPQGSVRVVATNALREARNRSDFIRRAEEVLGHPVEVISGREEARLIYLGVANSMPDSGGRRLVSDIGGGSTEFIIGQGFESELRESLQMGCVSYTQRYFRDGKITPARYAQAYTAARLELMGIENSLRRLGWQQAVGASGTIRAVALAIKAGGHGNGEISPDGLAWLKRKVLKLGDVEKLDLEGIKPDRRTIFPAGLAILEAIFDALELEQMVHSEGALREGVLYDLVGRHQHEDVRERTISSLMQRYHVDPEQASRVEAKALKVLAEVGDAWELNGELHRDLLSWGARVHEIGLDIAHYHYHKHGAYLIEHSDLAGFSRQDQQMLSLLVRGHRRNIPADKLAEFAEEGDKLVRLCIVLRFAILFHHIRGTQEMPSVRLKAEPKSLSVTFPEGWLEANPLTQADFAQEAEWLKRVGYSLNVR</sequence>
<accession>Q9ZN70</accession>
<evidence type="ECO:0000250" key="1">
    <source>
        <dbReference type="UniProtKB" id="P0AFL6"/>
    </source>
</evidence>
<evidence type="ECO:0000269" key="2">
    <source>
    </source>
</evidence>
<evidence type="ECO:0000269" key="3">
    <source>
    </source>
</evidence>
<evidence type="ECO:0000303" key="4">
    <source>
    </source>
</evidence>
<evidence type="ECO:0000303" key="5">
    <source>
    </source>
</evidence>
<evidence type="ECO:0000305" key="6"/>
<gene>
    <name evidence="4" type="primary">ppx</name>
    <name type="ordered locus">PA5241</name>
</gene>
<feature type="chain" id="PRO_0000194303" description="Exopolyphosphatase">
    <location>
        <begin position="1"/>
        <end position="506"/>
    </location>
</feature>
<feature type="mutagenesis site" description="Almost loss of hydrolase and transferase activities." evidence="3">
    <original>E</original>
    <variation>A</variation>
    <location>
        <position position="126"/>
    </location>
</feature>
<feature type="mutagenesis site" description="Almost loss of hydrolase and transferase activities." evidence="3">
    <original>D</original>
    <variation>A</variation>
    <location>
        <position position="149"/>
    </location>
</feature>
<feature type="mutagenesis site" description="Almost loss of hydrolase and transferase activities." evidence="3">
    <original>G</original>
    <variation>A</variation>
    <location>
        <position position="151"/>
    </location>
</feature>
<feature type="mutagenesis site" description="Almost loss of hydrolase and transferase activities." evidence="3">
    <original>S</original>
    <variation>A</variation>
    <location>
        <position position="154"/>
    </location>
</feature>
<feature type="mutagenesis site" description="Almost loss of hydrolase and transferase activities." evidence="3">
    <original>E</original>
    <variation>A</variation>
    <location>
        <position position="156"/>
    </location>
</feature>
<keyword id="KW-1003">Cell membrane</keyword>
<keyword id="KW-0378">Hydrolase</keyword>
<keyword id="KW-0460">Magnesium</keyword>
<keyword id="KW-0472">Membrane</keyword>
<keyword id="KW-1185">Reference proteome</keyword>
<keyword id="KW-0808">Transferase</keyword>
<dbReference type="EC" id="3.6.1.11" evidence="2 3"/>
<dbReference type="EC" id="2.7.4.1" evidence="3"/>
<dbReference type="EMBL" id="AB022715">
    <property type="protein sequence ID" value="BAA74460.1"/>
    <property type="molecule type" value="Genomic_DNA"/>
</dbReference>
<dbReference type="EMBL" id="AE004091">
    <property type="protein sequence ID" value="AAG08626.1"/>
    <property type="molecule type" value="Genomic_DNA"/>
</dbReference>
<dbReference type="PIR" id="H82991">
    <property type="entry name" value="H82991"/>
</dbReference>
<dbReference type="RefSeq" id="NP_253928.1">
    <property type="nucleotide sequence ID" value="NC_002516.2"/>
</dbReference>
<dbReference type="RefSeq" id="WP_003120380.1">
    <property type="nucleotide sequence ID" value="NC_002516.2"/>
</dbReference>
<dbReference type="SMR" id="Q9ZN70"/>
<dbReference type="FunCoup" id="Q9ZN70">
    <property type="interactions" value="356"/>
</dbReference>
<dbReference type="STRING" id="208964.PA5241"/>
<dbReference type="PaxDb" id="208964-PA5241"/>
<dbReference type="GeneID" id="877947"/>
<dbReference type="KEGG" id="pae:PA5241"/>
<dbReference type="PATRIC" id="fig|208964.12.peg.5493"/>
<dbReference type="PseudoCAP" id="PA5241"/>
<dbReference type="HOGENOM" id="CLU_025908_4_0_6"/>
<dbReference type="InParanoid" id="Q9ZN70"/>
<dbReference type="OrthoDB" id="9793035at2"/>
<dbReference type="PhylomeDB" id="Q9ZN70"/>
<dbReference type="BioCyc" id="PAER208964:G1FZ6-5361-MONOMER"/>
<dbReference type="BRENDA" id="3.6.1.11">
    <property type="organism ID" value="5087"/>
</dbReference>
<dbReference type="CD-CODE" id="C486FBEA">
    <property type="entry name" value="PolyP granule"/>
</dbReference>
<dbReference type="Proteomes" id="UP000002438">
    <property type="component" value="Chromosome"/>
</dbReference>
<dbReference type="GO" id="GO:0005886">
    <property type="term" value="C:plasma membrane"/>
    <property type="evidence" value="ECO:0007669"/>
    <property type="project" value="UniProtKB-SubCell"/>
</dbReference>
<dbReference type="GO" id="GO:0004309">
    <property type="term" value="F:exopolyphosphatase activity"/>
    <property type="evidence" value="ECO:0000314"/>
    <property type="project" value="PseudoCAP"/>
</dbReference>
<dbReference type="GO" id="GO:0008976">
    <property type="term" value="F:polyphosphate kinase activity"/>
    <property type="evidence" value="ECO:0007669"/>
    <property type="project" value="UniProtKB-EC"/>
</dbReference>
<dbReference type="GO" id="GO:0071978">
    <property type="term" value="P:bacterial-type flagellum-dependent swarming motility"/>
    <property type="evidence" value="ECO:0000314"/>
    <property type="project" value="PseudoCAP"/>
</dbReference>
<dbReference type="GO" id="GO:0071977">
    <property type="term" value="P:bacterial-type flagellum-dependent swimming motility"/>
    <property type="evidence" value="ECO:0000315"/>
    <property type="project" value="PseudoCAP"/>
</dbReference>
<dbReference type="GO" id="GO:0006995">
    <property type="term" value="P:cellular response to nitrogen starvation"/>
    <property type="evidence" value="ECO:0000314"/>
    <property type="project" value="PseudoCAP"/>
</dbReference>
<dbReference type="GO" id="GO:0016036">
    <property type="term" value="P:cellular response to phosphate starvation"/>
    <property type="evidence" value="ECO:0000314"/>
    <property type="project" value="PseudoCAP"/>
</dbReference>
<dbReference type="GO" id="GO:0009247">
    <property type="term" value="P:glycolipid biosynthetic process"/>
    <property type="evidence" value="ECO:0000315"/>
    <property type="project" value="PseudoCAP"/>
</dbReference>
<dbReference type="GO" id="GO:0006798">
    <property type="term" value="P:polyphosphate catabolic process"/>
    <property type="evidence" value="ECO:0000318"/>
    <property type="project" value="GO_Central"/>
</dbReference>
<dbReference type="GO" id="GO:0009372">
    <property type="term" value="P:quorum sensing"/>
    <property type="evidence" value="ECO:0000315"/>
    <property type="project" value="PseudoCAP"/>
</dbReference>
<dbReference type="GO" id="GO:0044010">
    <property type="term" value="P:single-species biofilm formation"/>
    <property type="evidence" value="ECO:0000315"/>
    <property type="project" value="PseudoCAP"/>
</dbReference>
<dbReference type="CDD" id="cd24053">
    <property type="entry name" value="ASKHA_NBD_EcPPX-GppA-like"/>
    <property type="match status" value="1"/>
</dbReference>
<dbReference type="FunFam" id="1.10.3210.10:FF:000004">
    <property type="entry name" value="Guanosine-5'-triphosphate,3'-diphosphate pyrophosphatase"/>
    <property type="match status" value="1"/>
</dbReference>
<dbReference type="FunFam" id="3.30.420.150:FF:000001">
    <property type="entry name" value="Guanosine-5'-triphosphate,3'-diphosphate pyrophosphatase"/>
    <property type="match status" value="1"/>
</dbReference>
<dbReference type="FunFam" id="3.30.420.40:FF:000023">
    <property type="entry name" value="Guanosine-5'-triphosphate,3'-diphosphate pyrophosphatase"/>
    <property type="match status" value="1"/>
</dbReference>
<dbReference type="Gene3D" id="3.30.420.40">
    <property type="match status" value="1"/>
</dbReference>
<dbReference type="Gene3D" id="3.30.420.150">
    <property type="entry name" value="Exopolyphosphatase. Domain 2"/>
    <property type="match status" value="1"/>
</dbReference>
<dbReference type="Gene3D" id="1.10.3210.10">
    <property type="entry name" value="Hypothetical protein af1432"/>
    <property type="match status" value="1"/>
</dbReference>
<dbReference type="InterPro" id="IPR043129">
    <property type="entry name" value="ATPase_NBD"/>
</dbReference>
<dbReference type="InterPro" id="IPR022371">
    <property type="entry name" value="Exopolyphosphatase"/>
</dbReference>
<dbReference type="InterPro" id="IPR050273">
    <property type="entry name" value="GppA/Ppx_hydrolase"/>
</dbReference>
<dbReference type="InterPro" id="IPR048950">
    <property type="entry name" value="Ppx_GppA_C"/>
</dbReference>
<dbReference type="InterPro" id="IPR003695">
    <property type="entry name" value="Ppx_GppA_N"/>
</dbReference>
<dbReference type="InterPro" id="IPR030673">
    <property type="entry name" value="PyroPPase_GppA_Ppx"/>
</dbReference>
<dbReference type="NCBIfam" id="TIGR03706">
    <property type="entry name" value="exo_poly_only"/>
    <property type="match status" value="1"/>
</dbReference>
<dbReference type="PANTHER" id="PTHR30005">
    <property type="entry name" value="EXOPOLYPHOSPHATASE"/>
    <property type="match status" value="1"/>
</dbReference>
<dbReference type="PANTHER" id="PTHR30005:SF14">
    <property type="entry name" value="EXOPOLYPHOSPHATASE"/>
    <property type="match status" value="1"/>
</dbReference>
<dbReference type="Pfam" id="PF02541">
    <property type="entry name" value="Ppx-GppA"/>
    <property type="match status" value="1"/>
</dbReference>
<dbReference type="Pfam" id="PF21447">
    <property type="entry name" value="Ppx-GppA_III"/>
    <property type="match status" value="1"/>
</dbReference>
<dbReference type="PIRSF" id="PIRSF001267">
    <property type="entry name" value="Pyrophosphatase_GppA_Ppx"/>
    <property type="match status" value="1"/>
</dbReference>
<dbReference type="SUPFAM" id="SSF53067">
    <property type="entry name" value="Actin-like ATPase domain"/>
    <property type="match status" value="2"/>
</dbReference>
<dbReference type="SUPFAM" id="SSF109604">
    <property type="entry name" value="HD-domain/PDEase-like"/>
    <property type="match status" value="1"/>
</dbReference>
<comment type="function">
    <text evidence="2 3">Degradation of inorganic polyphosphates (polyP). Releases orthophosphate processively from the ends of the polyP chain (PubMed:10382967, PubMed:26576296). Also has polyphosphate:ADP phosphotransferase activity, catalyzing the production of ATP from ADP and polyP (PubMed:26576296).</text>
</comment>
<comment type="catalytic activity">
    <reaction evidence="2 3">
        <text>[phosphate](n) + H2O = [phosphate](n-1) + phosphate + H(+)</text>
        <dbReference type="Rhea" id="RHEA:21528"/>
        <dbReference type="Rhea" id="RHEA-COMP:9859"/>
        <dbReference type="Rhea" id="RHEA-COMP:14279"/>
        <dbReference type="ChEBI" id="CHEBI:15377"/>
        <dbReference type="ChEBI" id="CHEBI:15378"/>
        <dbReference type="ChEBI" id="CHEBI:16838"/>
        <dbReference type="ChEBI" id="CHEBI:43474"/>
        <dbReference type="EC" id="3.6.1.11"/>
    </reaction>
</comment>
<comment type="catalytic activity">
    <reaction evidence="3">
        <text>[phosphate](n) + ATP = [phosphate](n+1) + ADP</text>
        <dbReference type="Rhea" id="RHEA:19573"/>
        <dbReference type="Rhea" id="RHEA-COMP:9859"/>
        <dbReference type="Rhea" id="RHEA-COMP:14280"/>
        <dbReference type="ChEBI" id="CHEBI:16838"/>
        <dbReference type="ChEBI" id="CHEBI:30616"/>
        <dbReference type="ChEBI" id="CHEBI:456216"/>
        <dbReference type="EC" id="2.7.4.1"/>
    </reaction>
</comment>
<comment type="cofactor">
    <cofactor evidence="3">
        <name>Mg(2+)</name>
        <dbReference type="ChEBI" id="CHEBI:18420"/>
    </cofactor>
</comment>
<comment type="activity regulation">
    <text evidence="3">Exopolyphosphatase activity is stimulated by NH(4)(+) and K(+). Phosphotransferase activity is insensitive to the addition of K(+) or NH(4)(+) ions.</text>
</comment>
<comment type="biophysicochemical properties">
    <kinetics>
        <KM evidence="3">1.3 uM for polyP(75)</KM>
        <KM evidence="3">3.29 uM for polyP(65)</KM>
        <KM evidence="3">7.14 uM for polyP(45)</KM>
        <KM evidence="3">11.03 uM for polyP(25)</KM>
        <text evidence="3">kcat is 57.02 sec(-1) for hydrolase activity with polyP(75) as substrate. kcat is 53.03 sec(-1) for hydrolase activity with polyP(65) as substrate. kcat is 41.23 sec(-1) for hydrolase activity with polyP(45) as substrate. kcat is 40.20 sec(-1) for hydrolase activity with polyP(25) as substrate. kcat is 3.93 sec(-1) for transferase activity with polyP(65) as substrate. kcat is 4.28 sec(-1) for transferase activity with polyP(25) as substrate.</text>
    </kinetics>
</comment>
<comment type="subunit">
    <text evidence="1">Homodimer.</text>
</comment>
<comment type="subcellular location">
    <subcellularLocation>
        <location evidence="1">Cell membrane</location>
        <topology evidence="1">Peripheral membrane protein</topology>
    </subcellularLocation>
</comment>
<comment type="domain">
    <text evidence="3">The catalytic activity is found in the N-terminal region formed by subdomains I and II. The peptide that connects subdomains II and III is also essential for activity. The C-terminal domain may be important for the recognition and/or interaction with long polyP chains.</text>
</comment>
<comment type="similarity">
    <text evidence="6">Belongs to the GppA/Ppx family.</text>
</comment>
<protein>
    <recommendedName>
        <fullName evidence="4 5">Exopolyphosphatase</fullName>
        <shortName evidence="4">ExopolyPase</shortName>
        <ecNumber evidence="2 3">3.6.1.11</ecNumber>
    </recommendedName>
    <alternativeName>
        <fullName evidence="5">Polyphosphate:ADP phosphotransferase</fullName>
        <shortName evidence="5">PolyP:ADP phosphotransferase</shortName>
        <ecNumber evidence="3">2.7.4.1</ecNumber>
    </alternativeName>
</protein>
<proteinExistence type="evidence at protein level"/>